<dbReference type="EMBL" id="CP000681">
    <property type="protein sequence ID" value="ABP77672.1"/>
    <property type="molecule type" value="Genomic_DNA"/>
</dbReference>
<dbReference type="SMR" id="A4YCI9"/>
<dbReference type="STRING" id="319224.Sputcn32_3967"/>
<dbReference type="KEGG" id="spc:Sputcn32_3967"/>
<dbReference type="eggNOG" id="COG0445">
    <property type="taxonomic scope" value="Bacteria"/>
</dbReference>
<dbReference type="HOGENOM" id="CLU_007831_2_2_6"/>
<dbReference type="GO" id="GO:0005829">
    <property type="term" value="C:cytosol"/>
    <property type="evidence" value="ECO:0007669"/>
    <property type="project" value="TreeGrafter"/>
</dbReference>
<dbReference type="GO" id="GO:0050660">
    <property type="term" value="F:flavin adenine dinucleotide binding"/>
    <property type="evidence" value="ECO:0007669"/>
    <property type="project" value="UniProtKB-UniRule"/>
</dbReference>
<dbReference type="GO" id="GO:0030488">
    <property type="term" value="P:tRNA methylation"/>
    <property type="evidence" value="ECO:0007669"/>
    <property type="project" value="TreeGrafter"/>
</dbReference>
<dbReference type="GO" id="GO:0002098">
    <property type="term" value="P:tRNA wobble uridine modification"/>
    <property type="evidence" value="ECO:0007669"/>
    <property type="project" value="InterPro"/>
</dbReference>
<dbReference type="FunFam" id="1.10.10.1800:FF:000001">
    <property type="entry name" value="tRNA uridine 5-carboxymethylaminomethyl modification enzyme MnmG"/>
    <property type="match status" value="1"/>
</dbReference>
<dbReference type="FunFam" id="1.10.150.570:FF:000001">
    <property type="entry name" value="tRNA uridine 5-carboxymethylaminomethyl modification enzyme MnmG"/>
    <property type="match status" value="1"/>
</dbReference>
<dbReference type="FunFam" id="3.50.50.60:FF:000002">
    <property type="entry name" value="tRNA uridine 5-carboxymethylaminomethyl modification enzyme MnmG"/>
    <property type="match status" value="1"/>
</dbReference>
<dbReference type="FunFam" id="3.50.50.60:FF:000010">
    <property type="entry name" value="tRNA uridine 5-carboxymethylaminomethyl modification enzyme MnmG"/>
    <property type="match status" value="1"/>
</dbReference>
<dbReference type="Gene3D" id="3.50.50.60">
    <property type="entry name" value="FAD/NAD(P)-binding domain"/>
    <property type="match status" value="2"/>
</dbReference>
<dbReference type="Gene3D" id="1.10.150.570">
    <property type="entry name" value="GidA associated domain, C-terminal subdomain"/>
    <property type="match status" value="1"/>
</dbReference>
<dbReference type="Gene3D" id="1.10.10.1800">
    <property type="entry name" value="tRNA uridine 5-carboxymethylaminomethyl modification enzyme MnmG/GidA"/>
    <property type="match status" value="1"/>
</dbReference>
<dbReference type="HAMAP" id="MF_00129">
    <property type="entry name" value="MnmG_GidA"/>
    <property type="match status" value="1"/>
</dbReference>
<dbReference type="InterPro" id="IPR036188">
    <property type="entry name" value="FAD/NAD-bd_sf"/>
</dbReference>
<dbReference type="InterPro" id="IPR049312">
    <property type="entry name" value="GIDA_C_N"/>
</dbReference>
<dbReference type="InterPro" id="IPR004416">
    <property type="entry name" value="MnmG"/>
</dbReference>
<dbReference type="InterPro" id="IPR002218">
    <property type="entry name" value="MnmG-rel"/>
</dbReference>
<dbReference type="InterPro" id="IPR020595">
    <property type="entry name" value="MnmG-rel_CS"/>
</dbReference>
<dbReference type="InterPro" id="IPR026904">
    <property type="entry name" value="MnmG_C"/>
</dbReference>
<dbReference type="InterPro" id="IPR047001">
    <property type="entry name" value="MnmG_C_subdom"/>
</dbReference>
<dbReference type="InterPro" id="IPR044920">
    <property type="entry name" value="MnmG_C_subdom_sf"/>
</dbReference>
<dbReference type="InterPro" id="IPR040131">
    <property type="entry name" value="MnmG_N"/>
</dbReference>
<dbReference type="NCBIfam" id="TIGR00136">
    <property type="entry name" value="mnmG_gidA"/>
    <property type="match status" value="1"/>
</dbReference>
<dbReference type="PANTHER" id="PTHR11806">
    <property type="entry name" value="GLUCOSE INHIBITED DIVISION PROTEIN A"/>
    <property type="match status" value="1"/>
</dbReference>
<dbReference type="PANTHER" id="PTHR11806:SF0">
    <property type="entry name" value="PROTEIN MTO1 HOMOLOG, MITOCHONDRIAL"/>
    <property type="match status" value="1"/>
</dbReference>
<dbReference type="Pfam" id="PF01134">
    <property type="entry name" value="GIDA"/>
    <property type="match status" value="1"/>
</dbReference>
<dbReference type="Pfam" id="PF21680">
    <property type="entry name" value="GIDA_C_1st"/>
    <property type="match status" value="1"/>
</dbReference>
<dbReference type="Pfam" id="PF13932">
    <property type="entry name" value="SAM_GIDA_C"/>
    <property type="match status" value="1"/>
</dbReference>
<dbReference type="SMART" id="SM01228">
    <property type="entry name" value="GIDA_assoc_3"/>
    <property type="match status" value="1"/>
</dbReference>
<dbReference type="SUPFAM" id="SSF51905">
    <property type="entry name" value="FAD/NAD(P)-binding domain"/>
    <property type="match status" value="1"/>
</dbReference>
<dbReference type="PROSITE" id="PS01280">
    <property type="entry name" value="GIDA_1"/>
    <property type="match status" value="1"/>
</dbReference>
<dbReference type="PROSITE" id="PS01281">
    <property type="entry name" value="GIDA_2"/>
    <property type="match status" value="1"/>
</dbReference>
<keyword id="KW-0963">Cytoplasm</keyword>
<keyword id="KW-0274">FAD</keyword>
<keyword id="KW-0285">Flavoprotein</keyword>
<keyword id="KW-0520">NAD</keyword>
<keyword id="KW-0819">tRNA processing</keyword>
<comment type="function">
    <text evidence="1">NAD-binding protein involved in the addition of a carboxymethylaminomethyl (cmnm) group at the wobble position (U34) of certain tRNAs, forming tRNA-cmnm(5)s(2)U34.</text>
</comment>
<comment type="cofactor">
    <cofactor evidence="1">
        <name>FAD</name>
        <dbReference type="ChEBI" id="CHEBI:57692"/>
    </cofactor>
</comment>
<comment type="subunit">
    <text evidence="1">Homodimer. Heterotetramer of two MnmE and two MnmG subunits.</text>
</comment>
<comment type="subcellular location">
    <subcellularLocation>
        <location evidence="1">Cytoplasm</location>
    </subcellularLocation>
</comment>
<comment type="similarity">
    <text evidence="1">Belongs to the MnmG family.</text>
</comment>
<reference key="1">
    <citation type="submission" date="2007-04" db="EMBL/GenBank/DDBJ databases">
        <title>Complete sequence of Shewanella putrefaciens CN-32.</title>
        <authorList>
            <consortium name="US DOE Joint Genome Institute"/>
            <person name="Copeland A."/>
            <person name="Lucas S."/>
            <person name="Lapidus A."/>
            <person name="Barry K."/>
            <person name="Detter J.C."/>
            <person name="Glavina del Rio T."/>
            <person name="Hammon N."/>
            <person name="Israni S."/>
            <person name="Dalin E."/>
            <person name="Tice H."/>
            <person name="Pitluck S."/>
            <person name="Chain P."/>
            <person name="Malfatti S."/>
            <person name="Shin M."/>
            <person name="Vergez L."/>
            <person name="Schmutz J."/>
            <person name="Larimer F."/>
            <person name="Land M."/>
            <person name="Hauser L."/>
            <person name="Kyrpides N."/>
            <person name="Mikhailova N."/>
            <person name="Romine M.F."/>
            <person name="Fredrickson J."/>
            <person name="Tiedje J."/>
            <person name="Richardson P."/>
        </authorList>
    </citation>
    <scope>NUCLEOTIDE SEQUENCE [LARGE SCALE GENOMIC DNA]</scope>
    <source>
        <strain>CN-32 / ATCC BAA-453</strain>
    </source>
</reference>
<organism>
    <name type="scientific">Shewanella putrefaciens (strain CN-32 / ATCC BAA-453)</name>
    <dbReference type="NCBI Taxonomy" id="319224"/>
    <lineage>
        <taxon>Bacteria</taxon>
        <taxon>Pseudomonadati</taxon>
        <taxon>Pseudomonadota</taxon>
        <taxon>Gammaproteobacteria</taxon>
        <taxon>Alteromonadales</taxon>
        <taxon>Shewanellaceae</taxon>
        <taxon>Shewanella</taxon>
    </lineage>
</organism>
<sequence>MHFHERFDVIVVGGGHAGTEAALAAARMGSKTLLLTHNIDTLGQMSCNPAIGGIGKGHLVKEIDALGGAMAIATDYAGIQFRTLNSSKGPAVRATRAQADRALYRQKIQNILQNQANLRIFQQAVDDLIVENDRVVGVVTQMGLAFESPAIVLTTGTFLSGKIHIGLENYSGGRAGDPPAIALANRLRELPIRVGRLKTGTPPRIDANTIDFSQMAEQKGDSPLPVMSFMGDVSHHPKQISCWITHTNEKTHEIIRGGLDRSPMYSGVIEGIGPRYCPSIEDKIHRFSDKSSHQIFIEPEGLNTTEIYPNGISTSLPFDVQLNLVRSIKGMENAEIVRPGYAIEYDYFDPRDLKNSLETKTINGLFFAGQINGTTGYEEAAAQGLLAGMNASLQVQGKDAWCPRRDEAYLGVLVDDLSTLGTKEPYRMFTSRAEYRLLLREDNADIRLTAKGRELGLVDDIRWAAFSEKLESIELELQRLRAQWVHPNSPLIHALNPHLNTPISREASFEELLRRPEMDYSKLMQIEGFGPGLEDPLAAEQVQIQVKYSGYIQRQQEEINKAVRNENTGLPLHLDYKEVPGLSNEVIAKLNSHKPETIGQASRISGVTPAAISILLVHLKKRGLLRKSA</sequence>
<protein>
    <recommendedName>
        <fullName evidence="1">tRNA uridine 5-carboxymethylaminomethyl modification enzyme MnmG</fullName>
    </recommendedName>
    <alternativeName>
        <fullName evidence="1">Glucose-inhibited division protein A</fullName>
    </alternativeName>
</protein>
<name>MNMG_SHEPC</name>
<feature type="chain" id="PRO_1000016674" description="tRNA uridine 5-carboxymethylaminomethyl modification enzyme MnmG">
    <location>
        <begin position="1"/>
        <end position="629"/>
    </location>
</feature>
<feature type="binding site" evidence="1">
    <location>
        <begin position="13"/>
        <end position="18"/>
    </location>
    <ligand>
        <name>FAD</name>
        <dbReference type="ChEBI" id="CHEBI:57692"/>
    </ligand>
</feature>
<feature type="binding site" evidence="1">
    <location>
        <begin position="273"/>
        <end position="287"/>
    </location>
    <ligand>
        <name>NAD(+)</name>
        <dbReference type="ChEBI" id="CHEBI:57540"/>
    </ligand>
</feature>
<evidence type="ECO:0000255" key="1">
    <source>
        <dbReference type="HAMAP-Rule" id="MF_00129"/>
    </source>
</evidence>
<proteinExistence type="inferred from homology"/>
<accession>A4YCI9</accession>
<gene>
    <name evidence="1" type="primary">mnmG</name>
    <name evidence="1" type="synonym">gidA</name>
    <name type="ordered locus">Sputcn32_3967</name>
</gene>